<organism>
    <name type="scientific">Ligilactobacillus salivarius (strain UCC118)</name>
    <name type="common">Lactobacillus salivarius</name>
    <dbReference type="NCBI Taxonomy" id="362948"/>
    <lineage>
        <taxon>Bacteria</taxon>
        <taxon>Bacillati</taxon>
        <taxon>Bacillota</taxon>
        <taxon>Bacilli</taxon>
        <taxon>Lactobacillales</taxon>
        <taxon>Lactobacillaceae</taxon>
        <taxon>Ligilactobacillus</taxon>
    </lineage>
</organism>
<gene>
    <name evidence="1" type="primary">glyS</name>
    <name type="ordered locus">LSL_0911</name>
</gene>
<sequence>MAHTFLLEIGLEEIPAHVVTPSVNQLVQKTTKFLKEQRIDFDEVIPYSTPRRLTVKVTGLADKQADIEEEAKGPSKKIALDDEGNWSKAAQGFVRGQGVTVDDIFFKELKGTEYVYVKKFIPGKPVSEVLTGMKDVAMDLKFPTMMRWGSNDFEYVRPIKWLVALLDDEVVPFEILDIKTGRTTQGHRFLGEAVDVPSADKYLETLETQKVIADAGVRKAEIRKQIDDLATENNWNIVVDEDLLEEVNNLVEYPTVFAGKFKEEYLQVPNEVLITSMKDHQRFFYVTDKDGNLLPNFVSVRNGNKDYLENVVAGNEKVLTARLEDAKFFYEEDQQHTIADYVERLKKVMFHDKIGTIYEKMERVNLLAKFLGNKLGLSETELKDLDRASMIYKFDLVTGMVGEFSELQGIMGEIYARLQGEDDNVSTAIREEYMPTSSEGELPQSNVGAVLSIADKLDSIQSFFAANMIPSGSNDPYALRRQALGIIRIALDKGWDISLPLLHEAINYAYAEREDLYKNTQPITNVSETDSFVIDRLAQVLSGNKFRRDILDAVVARADMPFIQALQAAQVLSKHAEDDNFKEVIEALTRVTRLAKKAPEFGSDAVIDSTLFENDTEKVLADEFAKVEAGYGDAEMNEKFTILSSLKDSITAYFDATMIMADDEKVKNNRLLQLVKIAELTEDFGSLDKLIVK</sequence>
<feature type="chain" id="PRO_1000006375" description="Glycine--tRNA ligase beta subunit">
    <location>
        <begin position="1"/>
        <end position="693"/>
    </location>
</feature>
<protein>
    <recommendedName>
        <fullName evidence="1">Glycine--tRNA ligase beta subunit</fullName>
        <ecNumber evidence="1">6.1.1.14</ecNumber>
    </recommendedName>
    <alternativeName>
        <fullName evidence="1">Glycyl-tRNA synthetase beta subunit</fullName>
        <shortName evidence="1">GlyRS</shortName>
    </alternativeName>
</protein>
<accession>Q1WTP1</accession>
<keyword id="KW-0030">Aminoacyl-tRNA synthetase</keyword>
<keyword id="KW-0067">ATP-binding</keyword>
<keyword id="KW-0963">Cytoplasm</keyword>
<keyword id="KW-0436">Ligase</keyword>
<keyword id="KW-0547">Nucleotide-binding</keyword>
<keyword id="KW-0648">Protein biosynthesis</keyword>
<keyword id="KW-1185">Reference proteome</keyword>
<name>SYGB_LIGS1</name>
<dbReference type="EC" id="6.1.1.14" evidence="1"/>
<dbReference type="EMBL" id="CP000233">
    <property type="protein sequence ID" value="ABD99721.1"/>
    <property type="molecule type" value="Genomic_DNA"/>
</dbReference>
<dbReference type="RefSeq" id="WP_011476035.1">
    <property type="nucleotide sequence ID" value="NC_007929.1"/>
</dbReference>
<dbReference type="RefSeq" id="YP_535804.1">
    <property type="nucleotide sequence ID" value="NC_007929.1"/>
</dbReference>
<dbReference type="SMR" id="Q1WTP1"/>
<dbReference type="STRING" id="362948.LSL_0911"/>
<dbReference type="KEGG" id="lsl:LSL_0911"/>
<dbReference type="PATRIC" id="fig|362948.14.peg.988"/>
<dbReference type="HOGENOM" id="CLU_007220_2_2_9"/>
<dbReference type="OrthoDB" id="9775440at2"/>
<dbReference type="Proteomes" id="UP000006559">
    <property type="component" value="Chromosome"/>
</dbReference>
<dbReference type="GO" id="GO:0005829">
    <property type="term" value="C:cytosol"/>
    <property type="evidence" value="ECO:0007669"/>
    <property type="project" value="TreeGrafter"/>
</dbReference>
<dbReference type="GO" id="GO:0004814">
    <property type="term" value="F:arginine-tRNA ligase activity"/>
    <property type="evidence" value="ECO:0007669"/>
    <property type="project" value="InterPro"/>
</dbReference>
<dbReference type="GO" id="GO:0005524">
    <property type="term" value="F:ATP binding"/>
    <property type="evidence" value="ECO:0007669"/>
    <property type="project" value="UniProtKB-UniRule"/>
</dbReference>
<dbReference type="GO" id="GO:0004820">
    <property type="term" value="F:glycine-tRNA ligase activity"/>
    <property type="evidence" value="ECO:0007669"/>
    <property type="project" value="UniProtKB-UniRule"/>
</dbReference>
<dbReference type="GO" id="GO:0006420">
    <property type="term" value="P:arginyl-tRNA aminoacylation"/>
    <property type="evidence" value="ECO:0007669"/>
    <property type="project" value="InterPro"/>
</dbReference>
<dbReference type="GO" id="GO:0006426">
    <property type="term" value="P:glycyl-tRNA aminoacylation"/>
    <property type="evidence" value="ECO:0007669"/>
    <property type="project" value="UniProtKB-UniRule"/>
</dbReference>
<dbReference type="HAMAP" id="MF_00255">
    <property type="entry name" value="Gly_tRNA_synth_beta"/>
    <property type="match status" value="1"/>
</dbReference>
<dbReference type="InterPro" id="IPR008909">
    <property type="entry name" value="DALR_anticod-bd"/>
</dbReference>
<dbReference type="InterPro" id="IPR015944">
    <property type="entry name" value="Gly-tRNA-synth_bsu"/>
</dbReference>
<dbReference type="InterPro" id="IPR006194">
    <property type="entry name" value="Gly-tRNA-synth_heterodimer"/>
</dbReference>
<dbReference type="NCBIfam" id="TIGR00211">
    <property type="entry name" value="glyS"/>
    <property type="match status" value="1"/>
</dbReference>
<dbReference type="PANTHER" id="PTHR30075:SF2">
    <property type="entry name" value="GLYCINE--TRNA LIGASE, CHLOROPLASTIC_MITOCHONDRIAL 2"/>
    <property type="match status" value="1"/>
</dbReference>
<dbReference type="PANTHER" id="PTHR30075">
    <property type="entry name" value="GLYCYL-TRNA SYNTHETASE"/>
    <property type="match status" value="1"/>
</dbReference>
<dbReference type="Pfam" id="PF05746">
    <property type="entry name" value="DALR_1"/>
    <property type="match status" value="1"/>
</dbReference>
<dbReference type="Pfam" id="PF02092">
    <property type="entry name" value="tRNA_synt_2f"/>
    <property type="match status" value="1"/>
</dbReference>
<dbReference type="PRINTS" id="PR01045">
    <property type="entry name" value="TRNASYNTHGB"/>
</dbReference>
<dbReference type="SUPFAM" id="SSF109604">
    <property type="entry name" value="HD-domain/PDEase-like"/>
    <property type="match status" value="1"/>
</dbReference>
<dbReference type="PROSITE" id="PS50861">
    <property type="entry name" value="AA_TRNA_LIGASE_II_GLYAB"/>
    <property type="match status" value="1"/>
</dbReference>
<comment type="catalytic activity">
    <reaction evidence="1">
        <text>tRNA(Gly) + glycine + ATP = glycyl-tRNA(Gly) + AMP + diphosphate</text>
        <dbReference type="Rhea" id="RHEA:16013"/>
        <dbReference type="Rhea" id="RHEA-COMP:9664"/>
        <dbReference type="Rhea" id="RHEA-COMP:9683"/>
        <dbReference type="ChEBI" id="CHEBI:30616"/>
        <dbReference type="ChEBI" id="CHEBI:33019"/>
        <dbReference type="ChEBI" id="CHEBI:57305"/>
        <dbReference type="ChEBI" id="CHEBI:78442"/>
        <dbReference type="ChEBI" id="CHEBI:78522"/>
        <dbReference type="ChEBI" id="CHEBI:456215"/>
        <dbReference type="EC" id="6.1.1.14"/>
    </reaction>
</comment>
<comment type="subunit">
    <text evidence="1">Tetramer of two alpha and two beta subunits.</text>
</comment>
<comment type="subcellular location">
    <subcellularLocation>
        <location evidence="1">Cytoplasm</location>
    </subcellularLocation>
</comment>
<comment type="similarity">
    <text evidence="1">Belongs to the class-II aminoacyl-tRNA synthetase family.</text>
</comment>
<reference key="1">
    <citation type="journal article" date="2006" name="Proc. Natl. Acad. Sci. U.S.A.">
        <title>Multireplicon genome architecture of Lactobacillus salivarius.</title>
        <authorList>
            <person name="Claesson M.J."/>
            <person name="Li Y."/>
            <person name="Leahy S."/>
            <person name="Canchaya C."/>
            <person name="van Pijkeren J.P."/>
            <person name="Cerdeno-Tarraga A.M."/>
            <person name="Parkhill J."/>
            <person name="Flynn S."/>
            <person name="O'Sullivan G.C."/>
            <person name="Collins J.K."/>
            <person name="Higgins D."/>
            <person name="Shanahan F."/>
            <person name="Fitzgerald G.F."/>
            <person name="van Sinderen D."/>
            <person name="O'Toole P.W."/>
        </authorList>
    </citation>
    <scope>NUCLEOTIDE SEQUENCE [LARGE SCALE GENOMIC DNA]</scope>
    <source>
        <strain>UCC118</strain>
    </source>
</reference>
<proteinExistence type="inferred from homology"/>
<evidence type="ECO:0000255" key="1">
    <source>
        <dbReference type="HAMAP-Rule" id="MF_00255"/>
    </source>
</evidence>